<feature type="chain" id="PRO_1000013443" description="Large ribosomal subunit protein bL34">
    <location>
        <begin position="1"/>
        <end position="45"/>
    </location>
</feature>
<feature type="region of interest" description="Disordered" evidence="2">
    <location>
        <begin position="1"/>
        <end position="21"/>
    </location>
</feature>
<feature type="compositionally biased region" description="Polar residues" evidence="2">
    <location>
        <begin position="1"/>
        <end position="10"/>
    </location>
</feature>
<feature type="compositionally biased region" description="Basic residues" evidence="2">
    <location>
        <begin position="11"/>
        <end position="20"/>
    </location>
</feature>
<dbReference type="EMBL" id="CP000681">
    <property type="protein sequence ID" value="ABP77708.1"/>
    <property type="molecule type" value="Genomic_DNA"/>
</dbReference>
<dbReference type="SMR" id="A4YCM5"/>
<dbReference type="STRING" id="319224.Sputcn32_4005"/>
<dbReference type="KEGG" id="spc:Sputcn32_4005"/>
<dbReference type="eggNOG" id="COG0230">
    <property type="taxonomic scope" value="Bacteria"/>
</dbReference>
<dbReference type="HOGENOM" id="CLU_129938_2_0_6"/>
<dbReference type="GO" id="GO:1990904">
    <property type="term" value="C:ribonucleoprotein complex"/>
    <property type="evidence" value="ECO:0007669"/>
    <property type="project" value="UniProtKB-KW"/>
</dbReference>
<dbReference type="GO" id="GO:0005840">
    <property type="term" value="C:ribosome"/>
    <property type="evidence" value="ECO:0007669"/>
    <property type="project" value="UniProtKB-KW"/>
</dbReference>
<dbReference type="GO" id="GO:0003735">
    <property type="term" value="F:structural constituent of ribosome"/>
    <property type="evidence" value="ECO:0007669"/>
    <property type="project" value="InterPro"/>
</dbReference>
<dbReference type="GO" id="GO:0006412">
    <property type="term" value="P:translation"/>
    <property type="evidence" value="ECO:0007669"/>
    <property type="project" value="UniProtKB-UniRule"/>
</dbReference>
<dbReference type="FunFam" id="1.10.287.3980:FF:000001">
    <property type="entry name" value="Mitochondrial ribosomal protein L34"/>
    <property type="match status" value="1"/>
</dbReference>
<dbReference type="Gene3D" id="1.10.287.3980">
    <property type="match status" value="1"/>
</dbReference>
<dbReference type="HAMAP" id="MF_00391">
    <property type="entry name" value="Ribosomal_bL34"/>
    <property type="match status" value="1"/>
</dbReference>
<dbReference type="InterPro" id="IPR000271">
    <property type="entry name" value="Ribosomal_bL34"/>
</dbReference>
<dbReference type="InterPro" id="IPR020939">
    <property type="entry name" value="Ribosomal_bL34_CS"/>
</dbReference>
<dbReference type="NCBIfam" id="TIGR01030">
    <property type="entry name" value="rpmH_bact"/>
    <property type="match status" value="1"/>
</dbReference>
<dbReference type="PANTHER" id="PTHR14503:SF4">
    <property type="entry name" value="LARGE RIBOSOMAL SUBUNIT PROTEIN BL34M"/>
    <property type="match status" value="1"/>
</dbReference>
<dbReference type="PANTHER" id="PTHR14503">
    <property type="entry name" value="MITOCHONDRIAL RIBOSOMAL PROTEIN 34 FAMILY MEMBER"/>
    <property type="match status" value="1"/>
</dbReference>
<dbReference type="Pfam" id="PF00468">
    <property type="entry name" value="Ribosomal_L34"/>
    <property type="match status" value="1"/>
</dbReference>
<dbReference type="PROSITE" id="PS00784">
    <property type="entry name" value="RIBOSOMAL_L34"/>
    <property type="match status" value="1"/>
</dbReference>
<name>RL34_SHEPC</name>
<accession>A4YCM5</accession>
<comment type="similarity">
    <text evidence="1">Belongs to the bacterial ribosomal protein bL34 family.</text>
</comment>
<reference key="1">
    <citation type="submission" date="2007-04" db="EMBL/GenBank/DDBJ databases">
        <title>Complete sequence of Shewanella putrefaciens CN-32.</title>
        <authorList>
            <consortium name="US DOE Joint Genome Institute"/>
            <person name="Copeland A."/>
            <person name="Lucas S."/>
            <person name="Lapidus A."/>
            <person name="Barry K."/>
            <person name="Detter J.C."/>
            <person name="Glavina del Rio T."/>
            <person name="Hammon N."/>
            <person name="Israni S."/>
            <person name="Dalin E."/>
            <person name="Tice H."/>
            <person name="Pitluck S."/>
            <person name="Chain P."/>
            <person name="Malfatti S."/>
            <person name="Shin M."/>
            <person name="Vergez L."/>
            <person name="Schmutz J."/>
            <person name="Larimer F."/>
            <person name="Land M."/>
            <person name="Hauser L."/>
            <person name="Kyrpides N."/>
            <person name="Mikhailova N."/>
            <person name="Romine M.F."/>
            <person name="Fredrickson J."/>
            <person name="Tiedje J."/>
            <person name="Richardson P."/>
        </authorList>
    </citation>
    <scope>NUCLEOTIDE SEQUENCE [LARGE SCALE GENOMIC DNA]</scope>
    <source>
        <strain>CN-32 / ATCC BAA-453</strain>
    </source>
</reference>
<sequence length="45" mass="5153">MSKRTFQPSNLKRKRSHGFRARMATVGGRKVLARRRAKGRARLSA</sequence>
<keyword id="KW-0687">Ribonucleoprotein</keyword>
<keyword id="KW-0689">Ribosomal protein</keyword>
<evidence type="ECO:0000255" key="1">
    <source>
        <dbReference type="HAMAP-Rule" id="MF_00391"/>
    </source>
</evidence>
<evidence type="ECO:0000256" key="2">
    <source>
        <dbReference type="SAM" id="MobiDB-lite"/>
    </source>
</evidence>
<evidence type="ECO:0000305" key="3"/>
<organism>
    <name type="scientific">Shewanella putrefaciens (strain CN-32 / ATCC BAA-453)</name>
    <dbReference type="NCBI Taxonomy" id="319224"/>
    <lineage>
        <taxon>Bacteria</taxon>
        <taxon>Pseudomonadati</taxon>
        <taxon>Pseudomonadota</taxon>
        <taxon>Gammaproteobacteria</taxon>
        <taxon>Alteromonadales</taxon>
        <taxon>Shewanellaceae</taxon>
        <taxon>Shewanella</taxon>
    </lineage>
</organism>
<protein>
    <recommendedName>
        <fullName evidence="1">Large ribosomal subunit protein bL34</fullName>
    </recommendedName>
    <alternativeName>
        <fullName evidence="3">50S ribosomal protein L34</fullName>
    </alternativeName>
</protein>
<proteinExistence type="inferred from homology"/>
<gene>
    <name evidence="1" type="primary">rpmH</name>
    <name type="ordered locus">Sputcn32_4005</name>
</gene>